<comment type="catalytic activity">
    <reaction evidence="1">
        <text>tRNA(Gly) + glycine + ATP = glycyl-tRNA(Gly) + AMP + diphosphate</text>
        <dbReference type="Rhea" id="RHEA:16013"/>
        <dbReference type="Rhea" id="RHEA-COMP:9664"/>
        <dbReference type="Rhea" id="RHEA-COMP:9683"/>
        <dbReference type="ChEBI" id="CHEBI:30616"/>
        <dbReference type="ChEBI" id="CHEBI:33019"/>
        <dbReference type="ChEBI" id="CHEBI:57305"/>
        <dbReference type="ChEBI" id="CHEBI:78442"/>
        <dbReference type="ChEBI" id="CHEBI:78522"/>
        <dbReference type="ChEBI" id="CHEBI:456215"/>
        <dbReference type="EC" id="6.1.1.14"/>
    </reaction>
</comment>
<comment type="subunit">
    <text evidence="1">Tetramer of two alpha and two beta subunits.</text>
</comment>
<comment type="subcellular location">
    <subcellularLocation>
        <location evidence="1">Cytoplasm</location>
    </subcellularLocation>
</comment>
<comment type="similarity">
    <text evidence="1">Belongs to the class-II aminoacyl-tRNA synthetase family.</text>
</comment>
<keyword id="KW-0030">Aminoacyl-tRNA synthetase</keyword>
<keyword id="KW-0067">ATP-binding</keyword>
<keyword id="KW-0963">Cytoplasm</keyword>
<keyword id="KW-0436">Ligase</keyword>
<keyword id="KW-0547">Nucleotide-binding</keyword>
<keyword id="KW-0648">Protein biosynthesis</keyword>
<keyword id="KW-1185">Reference proteome</keyword>
<gene>
    <name evidence="1" type="primary">glyS</name>
    <name type="ordered locus">PHZ_c1365</name>
</gene>
<protein>
    <recommendedName>
        <fullName evidence="1">Glycine--tRNA ligase beta subunit</fullName>
        <ecNumber evidence="1">6.1.1.14</ecNumber>
    </recommendedName>
    <alternativeName>
        <fullName evidence="1">Glycyl-tRNA synthetase beta subunit</fullName>
        <shortName evidence="1">GlyRS</shortName>
    </alternativeName>
</protein>
<feature type="chain" id="PRO_1000101314" description="Glycine--tRNA ligase beta subunit">
    <location>
        <begin position="1"/>
        <end position="669"/>
    </location>
</feature>
<organism>
    <name type="scientific">Phenylobacterium zucineum (strain HLK1)</name>
    <dbReference type="NCBI Taxonomy" id="450851"/>
    <lineage>
        <taxon>Bacteria</taxon>
        <taxon>Pseudomonadati</taxon>
        <taxon>Pseudomonadota</taxon>
        <taxon>Alphaproteobacteria</taxon>
        <taxon>Caulobacterales</taxon>
        <taxon>Caulobacteraceae</taxon>
        <taxon>Phenylobacterium</taxon>
    </lineage>
</organism>
<evidence type="ECO:0000255" key="1">
    <source>
        <dbReference type="HAMAP-Rule" id="MF_00255"/>
    </source>
</evidence>
<reference key="1">
    <citation type="journal article" date="2008" name="BMC Genomics">
        <title>Complete genome of Phenylobacterium zucineum - a novel facultative intracellular bacterium isolated from human erythroleukemia cell line K562.</title>
        <authorList>
            <person name="Luo Y."/>
            <person name="Xu X."/>
            <person name="Ding Z."/>
            <person name="Liu Z."/>
            <person name="Zhang B."/>
            <person name="Yan Z."/>
            <person name="Sun J."/>
            <person name="Hu S."/>
            <person name="Hu X."/>
        </authorList>
    </citation>
    <scope>NUCLEOTIDE SEQUENCE [LARGE SCALE GENOMIC DNA]</scope>
    <source>
        <strain>HLK1</strain>
    </source>
</reference>
<sequence length="669" mass="73165">MPQLLLELLSEEIPARMQAQAARDLERLARERLAAEGLLPEALKTFAGPRRLTLVAEGLPAAQADRREELKGPKVGAPEQALEGFLRKTGLTRDQLVERDGVFFATIEKPGRPTPEIVAEMVEAILRTFPWPKSMVSGTSKLRWVRPLRRILCVFDGEVVPFEVDGIASGDLSEGHRFMSDGQPFLVKDFEGYAAGLSHRSVVLDADERKERILEAAKTLCFARNLELVEDAGLLDEVAGLVEWPVPVLGDMDPAFLDLPPEVIRTSMRVHQRYFAVRDPAGGKLAPHFLTVANIAARDGGATIAKGNAKVLSARLSDARFFWDEDRKVRLEDRLEKLKGVTFHAKLGTMYERVQRIEALAGELAPFVRDEPETRTKAVQAARLAKADLVSGVVGEFPELQGIMGGYYAEAEGLDPEVVDAIRSHYRPQGPNDAVPVSSVAATVALADKLDTLVSFFGIGEKPTGSRDPFALRRAALGVIRIVLETRTRLPLKRFVSDEVLDFFADRLAVLLREQGKRHDLVAAVFALGDDDLVRIVARVEVLSAFLKTEDGANLLAGYKRAVNILRAEEKKGPLPAGEPAQAAGAPAEEAALVQAVAALDARLGPALEREDFEGAMTELAKLRGPVDAFFDKVLVNSDVPAERENRLRLLAKVRDAMGRVADFSQVTG</sequence>
<proteinExistence type="inferred from homology"/>
<accession>B4R9A9</accession>
<dbReference type="EC" id="6.1.1.14" evidence="1"/>
<dbReference type="EMBL" id="CP000747">
    <property type="protein sequence ID" value="ACG77779.1"/>
    <property type="molecule type" value="Genomic_DNA"/>
</dbReference>
<dbReference type="RefSeq" id="WP_012521923.1">
    <property type="nucleotide sequence ID" value="NC_011144.1"/>
</dbReference>
<dbReference type="SMR" id="B4R9A9"/>
<dbReference type="STRING" id="450851.PHZ_c1365"/>
<dbReference type="KEGG" id="pzu:PHZ_c1365"/>
<dbReference type="eggNOG" id="COG0751">
    <property type="taxonomic scope" value="Bacteria"/>
</dbReference>
<dbReference type="HOGENOM" id="CLU_007220_2_1_5"/>
<dbReference type="OrthoDB" id="9775440at2"/>
<dbReference type="Proteomes" id="UP000001868">
    <property type="component" value="Chromosome"/>
</dbReference>
<dbReference type="GO" id="GO:0005829">
    <property type="term" value="C:cytosol"/>
    <property type="evidence" value="ECO:0007669"/>
    <property type="project" value="TreeGrafter"/>
</dbReference>
<dbReference type="GO" id="GO:0004814">
    <property type="term" value="F:arginine-tRNA ligase activity"/>
    <property type="evidence" value="ECO:0007669"/>
    <property type="project" value="InterPro"/>
</dbReference>
<dbReference type="GO" id="GO:0005524">
    <property type="term" value="F:ATP binding"/>
    <property type="evidence" value="ECO:0007669"/>
    <property type="project" value="UniProtKB-UniRule"/>
</dbReference>
<dbReference type="GO" id="GO:0004820">
    <property type="term" value="F:glycine-tRNA ligase activity"/>
    <property type="evidence" value="ECO:0007669"/>
    <property type="project" value="UniProtKB-UniRule"/>
</dbReference>
<dbReference type="GO" id="GO:0006420">
    <property type="term" value="P:arginyl-tRNA aminoacylation"/>
    <property type="evidence" value="ECO:0007669"/>
    <property type="project" value="InterPro"/>
</dbReference>
<dbReference type="GO" id="GO:0006426">
    <property type="term" value="P:glycyl-tRNA aminoacylation"/>
    <property type="evidence" value="ECO:0007669"/>
    <property type="project" value="UniProtKB-UniRule"/>
</dbReference>
<dbReference type="HAMAP" id="MF_00255">
    <property type="entry name" value="Gly_tRNA_synth_beta"/>
    <property type="match status" value="1"/>
</dbReference>
<dbReference type="InterPro" id="IPR008909">
    <property type="entry name" value="DALR_anticod-bd"/>
</dbReference>
<dbReference type="InterPro" id="IPR015944">
    <property type="entry name" value="Gly-tRNA-synth_bsu"/>
</dbReference>
<dbReference type="InterPro" id="IPR006194">
    <property type="entry name" value="Gly-tRNA-synth_heterodimer"/>
</dbReference>
<dbReference type="NCBIfam" id="TIGR00211">
    <property type="entry name" value="glyS"/>
    <property type="match status" value="1"/>
</dbReference>
<dbReference type="PANTHER" id="PTHR30075:SF2">
    <property type="entry name" value="GLYCINE--TRNA LIGASE, CHLOROPLASTIC_MITOCHONDRIAL 2"/>
    <property type="match status" value="1"/>
</dbReference>
<dbReference type="PANTHER" id="PTHR30075">
    <property type="entry name" value="GLYCYL-TRNA SYNTHETASE"/>
    <property type="match status" value="1"/>
</dbReference>
<dbReference type="Pfam" id="PF05746">
    <property type="entry name" value="DALR_1"/>
    <property type="match status" value="1"/>
</dbReference>
<dbReference type="Pfam" id="PF02092">
    <property type="entry name" value="tRNA_synt_2f"/>
    <property type="match status" value="1"/>
</dbReference>
<dbReference type="PRINTS" id="PR01045">
    <property type="entry name" value="TRNASYNTHGB"/>
</dbReference>
<dbReference type="SUPFAM" id="SSF109604">
    <property type="entry name" value="HD-domain/PDEase-like"/>
    <property type="match status" value="1"/>
</dbReference>
<dbReference type="PROSITE" id="PS50861">
    <property type="entry name" value="AA_TRNA_LIGASE_II_GLYAB"/>
    <property type="match status" value="1"/>
</dbReference>
<name>SYGB_PHEZH</name>